<organism>
    <name type="scientific">Thermosynechococcus vestitus (strain NIES-2133 / IAM M-273 / BP-1)</name>
    <dbReference type="NCBI Taxonomy" id="197221"/>
    <lineage>
        <taxon>Bacteria</taxon>
        <taxon>Bacillati</taxon>
        <taxon>Cyanobacteriota</taxon>
        <taxon>Cyanophyceae</taxon>
        <taxon>Acaryochloridales</taxon>
        <taxon>Thermosynechococcaceae</taxon>
        <taxon>Thermosynechococcus</taxon>
    </lineage>
</organism>
<accession>Q8DJP8</accession>
<proteinExistence type="evidence at protein level"/>
<reference key="1">
    <citation type="journal article" date="2002" name="DNA Res.">
        <title>Complete genome structure of the thermophilic cyanobacterium Thermosynechococcus elongatus BP-1.</title>
        <authorList>
            <person name="Nakamura Y."/>
            <person name="Kaneko T."/>
            <person name="Sato S."/>
            <person name="Ikeuchi M."/>
            <person name="Katoh H."/>
            <person name="Sasamoto S."/>
            <person name="Watanabe A."/>
            <person name="Iriguchi M."/>
            <person name="Kawashima K."/>
            <person name="Kimura T."/>
            <person name="Kishida Y."/>
            <person name="Kiyokawa C."/>
            <person name="Kohara M."/>
            <person name="Matsumoto M."/>
            <person name="Matsuno A."/>
            <person name="Nakazaki N."/>
            <person name="Shimpo S."/>
            <person name="Sugimoto M."/>
            <person name="Takeuchi C."/>
            <person name="Yamada M."/>
            <person name="Tabata S."/>
        </authorList>
    </citation>
    <scope>NUCLEOTIDE SEQUENCE [LARGE SCALE GENOMIC DNA]</scope>
    <source>
        <strain>NIES-2133 / IAM M-273 / BP-1</strain>
    </source>
</reference>
<reference evidence="5 6" key="2">
    <citation type="journal article" date="2014" name="Proc. Natl. Acad. Sci. U.S.A.">
        <title>Loss of quaternary structure is associated with rapid sequence divergence in the OSBS family.</title>
        <authorList>
            <person name="Odokonyero D."/>
            <person name="Sakai A."/>
            <person name="Patskovsky Y."/>
            <person name="Malashkevich V.N."/>
            <person name="Fedorov A.A."/>
            <person name="Bonanno J.B."/>
            <person name="Fedorov E.V."/>
            <person name="Toro R."/>
            <person name="Agarwal R."/>
            <person name="Wang C."/>
            <person name="Ozerova N.D."/>
            <person name="Yew W.S."/>
            <person name="Sauder J.M."/>
            <person name="Swaminathan S."/>
            <person name="Burley S.K."/>
            <person name="Almo S.C."/>
            <person name="Glasner M.E."/>
        </authorList>
    </citation>
    <scope>X-RAY CRYSTALLOGRAPHY (1.42 ANGSTROMS) OF 2-322 OF APOENZYME AND IN COMPLEX WITH MAGNESIUM</scope>
    <scope>FUNCTION</scope>
    <scope>CATALYTIC ACTIVITY</scope>
    <scope>COFACTOR</scope>
    <scope>BIOPHYSICOCHEMICAL PROPERTIES</scope>
    <scope>SUBUNIT</scope>
</reference>
<protein>
    <recommendedName>
        <fullName evidence="1 3">o-succinylbenzoate synthase</fullName>
        <shortName evidence="1">OSB synthase</shortName>
        <shortName evidence="1 3">OSBS</shortName>
        <ecNumber evidence="1 2">4.2.1.113</ecNumber>
    </recommendedName>
    <alternativeName>
        <fullName evidence="1">4-(2'-carboxyphenyl)-4-oxybutyric acid synthase</fullName>
    </alternativeName>
    <alternativeName>
        <fullName evidence="1">o-succinylbenzoic acid synthase</fullName>
    </alternativeName>
</protein>
<gene>
    <name evidence="1" type="primary">menC</name>
    <name evidence="4" type="ordered locus">tlr1174</name>
</gene>
<name>MENC_THEVB</name>
<feature type="chain" id="PRO_0000455095" description="o-succinylbenzoate synthase">
    <location>
        <begin position="1"/>
        <end position="322"/>
    </location>
</feature>
<feature type="active site" description="Proton donor" evidence="1">
    <location>
        <position position="136"/>
    </location>
</feature>
<feature type="active site" description="Proton acceptor" evidence="1">
    <location>
        <position position="243"/>
    </location>
</feature>
<feature type="binding site" evidence="1 2 6">
    <location>
        <position position="165"/>
    </location>
    <ligand>
        <name>Mg(2+)</name>
        <dbReference type="ChEBI" id="CHEBI:18420"/>
    </ligand>
</feature>
<feature type="binding site" evidence="1 2 6">
    <location>
        <position position="194"/>
    </location>
    <ligand>
        <name>Mg(2+)</name>
        <dbReference type="ChEBI" id="CHEBI:18420"/>
    </ligand>
</feature>
<feature type="binding site" evidence="1 2 6">
    <location>
        <position position="219"/>
    </location>
    <ligand>
        <name>Mg(2+)</name>
        <dbReference type="ChEBI" id="CHEBI:18420"/>
    </ligand>
</feature>
<feature type="strand" evidence="7">
    <location>
        <begin position="2"/>
        <end position="18"/>
    </location>
</feature>
<feature type="strand" evidence="7">
    <location>
        <begin position="21"/>
        <end position="34"/>
    </location>
</feature>
<feature type="strand" evidence="7">
    <location>
        <begin position="40"/>
        <end position="45"/>
    </location>
</feature>
<feature type="strand" evidence="7">
    <location>
        <begin position="51"/>
        <end position="53"/>
    </location>
</feature>
<feature type="helix" evidence="7">
    <location>
        <begin position="56"/>
        <end position="65"/>
    </location>
</feature>
<feature type="strand" evidence="7">
    <location>
        <begin position="68"/>
        <end position="70"/>
    </location>
</feature>
<feature type="helix" evidence="7">
    <location>
        <begin position="72"/>
        <end position="75"/>
    </location>
</feature>
<feature type="helix" evidence="7">
    <location>
        <begin position="83"/>
        <end position="95"/>
    </location>
</feature>
<feature type="turn" evidence="7">
    <location>
        <begin position="96"/>
        <end position="98"/>
    </location>
</feature>
<feature type="strand" evidence="7">
    <location>
        <begin position="110"/>
        <end position="112"/>
    </location>
</feature>
<feature type="helix" evidence="7">
    <location>
        <begin position="115"/>
        <end position="117"/>
    </location>
</feature>
<feature type="helix" evidence="7">
    <location>
        <begin position="118"/>
        <end position="127"/>
    </location>
</feature>
<feature type="strand" evidence="7">
    <location>
        <begin position="132"/>
        <end position="136"/>
    </location>
</feature>
<feature type="strand" evidence="7">
    <location>
        <begin position="138"/>
        <end position="140"/>
    </location>
</feature>
<feature type="helix" evidence="7">
    <location>
        <begin position="142"/>
        <end position="155"/>
    </location>
</feature>
<feature type="strand" evidence="7">
    <location>
        <begin position="161"/>
        <end position="165"/>
    </location>
</feature>
<feature type="helix" evidence="7">
    <location>
        <begin position="172"/>
        <end position="185"/>
    </location>
</feature>
<feature type="strand" evidence="7">
    <location>
        <begin position="190"/>
        <end position="194"/>
    </location>
</feature>
<feature type="helix" evidence="7">
    <location>
        <begin position="202"/>
        <end position="211"/>
    </location>
</feature>
<feature type="strand" evidence="7">
    <location>
        <begin position="216"/>
        <end position="219"/>
    </location>
</feature>
<feature type="helix" evidence="7">
    <location>
        <begin position="225"/>
        <end position="233"/>
    </location>
</feature>
<feature type="strand" evidence="7">
    <location>
        <begin position="238"/>
        <end position="242"/>
    </location>
</feature>
<feature type="helix" evidence="7">
    <location>
        <begin position="244"/>
        <end position="247"/>
    </location>
</feature>
<feature type="helix" evidence="7">
    <location>
        <begin position="250"/>
        <end position="258"/>
    </location>
</feature>
<feature type="helix" evidence="7">
    <location>
        <begin position="263"/>
        <end position="265"/>
    </location>
</feature>
<feature type="strand" evidence="7">
    <location>
        <begin position="266"/>
        <end position="269"/>
    </location>
</feature>
<feature type="helix" evidence="7">
    <location>
        <begin position="275"/>
        <end position="288"/>
    </location>
</feature>
<feature type="turn" evidence="7">
    <location>
        <begin position="299"/>
        <end position="301"/>
    </location>
</feature>
<feature type="helix" evidence="7">
    <location>
        <begin position="310"/>
        <end position="318"/>
    </location>
</feature>
<comment type="function">
    <text evidence="2">Converts 2-succinyl-6-hydroxy-2,4-cyclohexadiene-1-carboxylate (SHCHC) to 2-succinylbenzoate (OSB) (PubMed:24872444). Does not show N-succinylamino acid racemase (NSAR) activity with N-succinyl-L-phenylglycine as substrate (PubMed:24872444).</text>
</comment>
<comment type="catalytic activity">
    <reaction evidence="1 2">
        <text>(1R,6R)-6-hydroxy-2-succinyl-cyclohexa-2,4-diene-1-carboxylate = 2-succinylbenzoate + H2O</text>
        <dbReference type="Rhea" id="RHEA:10196"/>
        <dbReference type="ChEBI" id="CHEBI:15377"/>
        <dbReference type="ChEBI" id="CHEBI:18325"/>
        <dbReference type="ChEBI" id="CHEBI:58689"/>
        <dbReference type="EC" id="4.2.1.113"/>
    </reaction>
</comment>
<comment type="cofactor">
    <cofactor evidence="1 2">
        <name>a divalent metal cation</name>
        <dbReference type="ChEBI" id="CHEBI:60240"/>
    </cofactor>
</comment>
<comment type="biophysicochemical properties">
    <kinetics>
        <KM evidence="2">78 uM for SHCHC</KM>
        <text evidence="2">kcat is 80 sec(-1) with SHCHC as substrate.</text>
    </kinetics>
</comment>
<comment type="pathway">
    <text evidence="1">Quinol/quinone metabolism; 1,4-dihydroxy-2-naphthoate biosynthesis; 1,4-dihydroxy-2-naphthoate from chorismate: step 4/7.</text>
</comment>
<comment type="pathway">
    <text evidence="1">Cofactor biosynthesis; phylloquinone biosynthesis.</text>
</comment>
<comment type="subunit">
    <text evidence="2">Monomer.</text>
</comment>
<comment type="similarity">
    <text evidence="1">Belongs to the mandelate racemase/muconate lactonizing enzyme family. MenC type 1 subfamily.</text>
</comment>
<sequence>MRWQWRIYEEPLQEPLTTAQGVWRSRSGIYLRLEDEQGQVGYGEIAPLPGWGSETLNADIALCQQLPGHLTPEIMATIPEALPAAQFGFATAWQSVGRLPYRVRPWPICALLGSGQAALEQWQQSWQRGQTTFKWKVGVMSPEEEQAILKALLAALPPGAKLRLDANGSWDRATANRWFAWLDRHGNGKIEYVEQPLPPDQWQALLSLAQTVTTAIALDESVVSAAEVQRWVDRGWPGFFVIKTALFGDPDSLSLLLRRGLEPQRLVFSSALEGAIARTAIFHLLETWQPCHALGFGVDRWRSAPLLTTLTAYERLWERLDQ</sequence>
<keyword id="KW-0002">3D-structure</keyword>
<keyword id="KW-0456">Lyase</keyword>
<keyword id="KW-0460">Magnesium</keyword>
<keyword id="KW-0479">Metal-binding</keyword>
<keyword id="KW-1185">Reference proteome</keyword>
<evidence type="ECO:0000255" key="1">
    <source>
        <dbReference type="HAMAP-Rule" id="MF_00470"/>
    </source>
</evidence>
<evidence type="ECO:0000269" key="2">
    <source>
    </source>
</evidence>
<evidence type="ECO:0000303" key="3">
    <source>
    </source>
</evidence>
<evidence type="ECO:0000312" key="4">
    <source>
        <dbReference type="EMBL" id="BAC08726.1"/>
    </source>
</evidence>
<evidence type="ECO:0007744" key="5">
    <source>
        <dbReference type="PDB" id="2OZT"/>
    </source>
</evidence>
<evidence type="ECO:0007744" key="6">
    <source>
        <dbReference type="PDB" id="3H7V"/>
    </source>
</evidence>
<evidence type="ECO:0007829" key="7">
    <source>
        <dbReference type="PDB" id="2OZT"/>
    </source>
</evidence>
<dbReference type="EC" id="4.2.1.113" evidence="1 2"/>
<dbReference type="EMBL" id="BA000039">
    <property type="protein sequence ID" value="BAC08726.1"/>
    <property type="molecule type" value="Genomic_DNA"/>
</dbReference>
<dbReference type="RefSeq" id="NP_681964.1">
    <property type="nucleotide sequence ID" value="NC_004113.1"/>
</dbReference>
<dbReference type="RefSeq" id="WP_011057016.1">
    <property type="nucleotide sequence ID" value="NC_004113.1"/>
</dbReference>
<dbReference type="PDB" id="2OZT">
    <property type="method" value="X-ray"/>
    <property type="resolution" value="1.42 A"/>
    <property type="chains" value="A=2-322"/>
</dbReference>
<dbReference type="PDB" id="3H7V">
    <property type="method" value="X-ray"/>
    <property type="resolution" value="1.70 A"/>
    <property type="chains" value="A=2-322"/>
</dbReference>
<dbReference type="PDBsum" id="2OZT"/>
<dbReference type="PDBsum" id="3H7V"/>
<dbReference type="SMR" id="Q8DJP8"/>
<dbReference type="STRING" id="197221.gene:10747769"/>
<dbReference type="EnsemblBacteria" id="BAC08726">
    <property type="protein sequence ID" value="BAC08726"/>
    <property type="gene ID" value="BAC08726"/>
</dbReference>
<dbReference type="KEGG" id="tel:tlr1174"/>
<dbReference type="PATRIC" id="fig|197221.4.peg.1234"/>
<dbReference type="eggNOG" id="COG4948">
    <property type="taxonomic scope" value="Bacteria"/>
</dbReference>
<dbReference type="UniPathway" id="UPA00995"/>
<dbReference type="UniPathway" id="UPA01057">
    <property type="reaction ID" value="UER00165"/>
</dbReference>
<dbReference type="EvolutionaryTrace" id="Q8DJP8"/>
<dbReference type="Proteomes" id="UP000000440">
    <property type="component" value="Chromosome"/>
</dbReference>
<dbReference type="GO" id="GO:0000287">
    <property type="term" value="F:magnesium ion binding"/>
    <property type="evidence" value="ECO:0007669"/>
    <property type="project" value="UniProtKB-UniRule"/>
</dbReference>
<dbReference type="GO" id="GO:0043748">
    <property type="term" value="F:O-succinylbenzoate synthase activity"/>
    <property type="evidence" value="ECO:0007669"/>
    <property type="project" value="UniProtKB-EC"/>
</dbReference>
<dbReference type="GO" id="GO:0009234">
    <property type="term" value="P:menaquinone biosynthetic process"/>
    <property type="evidence" value="ECO:0007669"/>
    <property type="project" value="InterPro"/>
</dbReference>
<dbReference type="GO" id="GO:0042372">
    <property type="term" value="P:phylloquinone biosynthetic process"/>
    <property type="evidence" value="ECO:0007669"/>
    <property type="project" value="UniProtKB-UniRule"/>
</dbReference>
<dbReference type="CDD" id="cd03320">
    <property type="entry name" value="OSBS"/>
    <property type="match status" value="1"/>
</dbReference>
<dbReference type="Gene3D" id="3.20.20.120">
    <property type="entry name" value="Enolase-like C-terminal domain"/>
    <property type="match status" value="1"/>
</dbReference>
<dbReference type="Gene3D" id="3.30.390.10">
    <property type="entry name" value="Enolase-like, N-terminal domain"/>
    <property type="match status" value="1"/>
</dbReference>
<dbReference type="HAMAP" id="MF_00470">
    <property type="entry name" value="MenC_1"/>
    <property type="match status" value="1"/>
</dbReference>
<dbReference type="InterPro" id="IPR036849">
    <property type="entry name" value="Enolase-like_C_sf"/>
</dbReference>
<dbReference type="InterPro" id="IPR029017">
    <property type="entry name" value="Enolase-like_N"/>
</dbReference>
<dbReference type="InterPro" id="IPR029065">
    <property type="entry name" value="Enolase_C-like"/>
</dbReference>
<dbReference type="InterPro" id="IPR013342">
    <property type="entry name" value="Mandelate_racemase_C"/>
</dbReference>
<dbReference type="InterPro" id="IPR010196">
    <property type="entry name" value="OSB_synthase_MenC1"/>
</dbReference>
<dbReference type="InterPro" id="IPR041338">
    <property type="entry name" value="OSBS_N"/>
</dbReference>
<dbReference type="NCBIfam" id="TIGR01927">
    <property type="entry name" value="menC_gam_Gplu"/>
    <property type="match status" value="1"/>
</dbReference>
<dbReference type="NCBIfam" id="NF002739">
    <property type="entry name" value="PRK02714.1"/>
    <property type="match status" value="1"/>
</dbReference>
<dbReference type="PANTHER" id="PTHR48073:SF2">
    <property type="entry name" value="O-SUCCINYLBENZOATE SYNTHASE"/>
    <property type="match status" value="1"/>
</dbReference>
<dbReference type="PANTHER" id="PTHR48073">
    <property type="entry name" value="O-SUCCINYLBENZOATE SYNTHASE-RELATED"/>
    <property type="match status" value="1"/>
</dbReference>
<dbReference type="Pfam" id="PF21508">
    <property type="entry name" value="MenC_N"/>
    <property type="match status" value="1"/>
</dbReference>
<dbReference type="Pfam" id="PF13378">
    <property type="entry name" value="MR_MLE_C"/>
    <property type="match status" value="1"/>
</dbReference>
<dbReference type="SFLD" id="SFLDG00180">
    <property type="entry name" value="muconate_cycloisomerase"/>
    <property type="match status" value="1"/>
</dbReference>
<dbReference type="SFLD" id="SFLDF00009">
    <property type="entry name" value="o-succinylbenzoate_synthase"/>
    <property type="match status" value="1"/>
</dbReference>
<dbReference type="SMART" id="SM00922">
    <property type="entry name" value="MR_MLE"/>
    <property type="match status" value="1"/>
</dbReference>
<dbReference type="SUPFAM" id="SSF51604">
    <property type="entry name" value="Enolase C-terminal domain-like"/>
    <property type="match status" value="1"/>
</dbReference>
<dbReference type="SUPFAM" id="SSF54826">
    <property type="entry name" value="Enolase N-terminal domain-like"/>
    <property type="match status" value="1"/>
</dbReference>